<comment type="function">
    <text evidence="1">ATP-binding RNA helicase involved in the biogenesis of 60S ribosomal subunits and is required for the normal formation of 25S and 5.8S rRNAs.</text>
</comment>
<comment type="catalytic activity">
    <reaction>
        <text>ATP + H2O = ADP + phosphate + H(+)</text>
        <dbReference type="Rhea" id="RHEA:13065"/>
        <dbReference type="ChEBI" id="CHEBI:15377"/>
        <dbReference type="ChEBI" id="CHEBI:15378"/>
        <dbReference type="ChEBI" id="CHEBI:30616"/>
        <dbReference type="ChEBI" id="CHEBI:43474"/>
        <dbReference type="ChEBI" id="CHEBI:456216"/>
        <dbReference type="EC" id="3.6.4.13"/>
    </reaction>
</comment>
<comment type="subcellular location">
    <subcellularLocation>
        <location evidence="1">Nucleus</location>
        <location evidence="1">Nucleolus</location>
    </subcellularLocation>
</comment>
<comment type="domain">
    <text>The Q motif is unique to and characteristic of the DEAD box family of RNA helicases and controls ATP binding and hydrolysis.</text>
</comment>
<comment type="similarity">
    <text evidence="5">Belongs to the DEAD box helicase family. DDX54/DBP10 subfamily.</text>
</comment>
<protein>
    <recommendedName>
        <fullName>ATP-dependent RNA helicase DBP10</fullName>
        <ecNumber>3.6.4.13</ecNumber>
    </recommendedName>
</protein>
<gene>
    <name type="primary">DBP10</name>
    <name type="ORF">FGRRES_09766</name>
    <name type="ORF">FGSG_09766</name>
</gene>
<keyword id="KW-0067">ATP-binding</keyword>
<keyword id="KW-0347">Helicase</keyword>
<keyword id="KW-0378">Hydrolase</keyword>
<keyword id="KW-0547">Nucleotide-binding</keyword>
<keyword id="KW-0539">Nucleus</keyword>
<keyword id="KW-1185">Reference proteome</keyword>
<keyword id="KW-0690">Ribosome biogenesis</keyword>
<keyword id="KW-0694">RNA-binding</keyword>
<keyword id="KW-0698">rRNA processing</keyword>
<reference key="1">
    <citation type="journal article" date="2007" name="Science">
        <title>The Fusarium graminearum genome reveals a link between localized polymorphism and pathogen specialization.</title>
        <authorList>
            <person name="Cuomo C.A."/>
            <person name="Gueldener U."/>
            <person name="Xu J.-R."/>
            <person name="Trail F."/>
            <person name="Turgeon B.G."/>
            <person name="Di Pietro A."/>
            <person name="Walton J.D."/>
            <person name="Ma L.-J."/>
            <person name="Baker S.E."/>
            <person name="Rep M."/>
            <person name="Adam G."/>
            <person name="Antoniw J."/>
            <person name="Baldwin T."/>
            <person name="Calvo S.E."/>
            <person name="Chang Y.-L."/>
            <person name="DeCaprio D."/>
            <person name="Gale L.R."/>
            <person name="Gnerre S."/>
            <person name="Goswami R.S."/>
            <person name="Hammond-Kosack K."/>
            <person name="Harris L.J."/>
            <person name="Hilburn K."/>
            <person name="Kennell J.C."/>
            <person name="Kroken S."/>
            <person name="Magnuson J.K."/>
            <person name="Mannhaupt G."/>
            <person name="Mauceli E.W."/>
            <person name="Mewes H.-W."/>
            <person name="Mitterbauer R."/>
            <person name="Muehlbauer G."/>
            <person name="Muensterkoetter M."/>
            <person name="Nelson D."/>
            <person name="O'Donnell K."/>
            <person name="Ouellet T."/>
            <person name="Qi W."/>
            <person name="Quesneville H."/>
            <person name="Roncero M.I.G."/>
            <person name="Seong K.-Y."/>
            <person name="Tetko I.V."/>
            <person name="Urban M."/>
            <person name="Waalwijk C."/>
            <person name="Ward T.J."/>
            <person name="Yao J."/>
            <person name="Birren B.W."/>
            <person name="Kistler H.C."/>
        </authorList>
    </citation>
    <scope>NUCLEOTIDE SEQUENCE [LARGE SCALE GENOMIC DNA]</scope>
    <source>
        <strain>ATCC MYA-4620 / CBS 123657 / FGSC 9075 / NRRL 31084 / PH-1</strain>
    </source>
</reference>
<reference key="2">
    <citation type="journal article" date="2010" name="Nature">
        <title>Comparative genomics reveals mobile pathogenicity chromosomes in Fusarium.</title>
        <authorList>
            <person name="Ma L.-J."/>
            <person name="van der Does H.C."/>
            <person name="Borkovich K.A."/>
            <person name="Coleman J.J."/>
            <person name="Daboussi M.-J."/>
            <person name="Di Pietro A."/>
            <person name="Dufresne M."/>
            <person name="Freitag M."/>
            <person name="Grabherr M."/>
            <person name="Henrissat B."/>
            <person name="Houterman P.M."/>
            <person name="Kang S."/>
            <person name="Shim W.-B."/>
            <person name="Woloshuk C."/>
            <person name="Xie X."/>
            <person name="Xu J.-R."/>
            <person name="Antoniw J."/>
            <person name="Baker S.E."/>
            <person name="Bluhm B.H."/>
            <person name="Breakspear A."/>
            <person name="Brown D.W."/>
            <person name="Butchko R.A.E."/>
            <person name="Chapman S."/>
            <person name="Coulson R."/>
            <person name="Coutinho P.M."/>
            <person name="Danchin E.G.J."/>
            <person name="Diener A."/>
            <person name="Gale L.R."/>
            <person name="Gardiner D.M."/>
            <person name="Goff S."/>
            <person name="Hammond-Kosack K.E."/>
            <person name="Hilburn K."/>
            <person name="Hua-Van A."/>
            <person name="Jonkers W."/>
            <person name="Kazan K."/>
            <person name="Kodira C.D."/>
            <person name="Koehrsen M."/>
            <person name="Kumar L."/>
            <person name="Lee Y.-H."/>
            <person name="Li L."/>
            <person name="Manners J.M."/>
            <person name="Miranda-Saavedra D."/>
            <person name="Mukherjee M."/>
            <person name="Park G."/>
            <person name="Park J."/>
            <person name="Park S.-Y."/>
            <person name="Proctor R.H."/>
            <person name="Regev A."/>
            <person name="Ruiz-Roldan M.C."/>
            <person name="Sain D."/>
            <person name="Sakthikumar S."/>
            <person name="Sykes S."/>
            <person name="Schwartz D.C."/>
            <person name="Turgeon B.G."/>
            <person name="Wapinski I."/>
            <person name="Yoder O."/>
            <person name="Young S."/>
            <person name="Zeng Q."/>
            <person name="Zhou S."/>
            <person name="Galagan J."/>
            <person name="Cuomo C.A."/>
            <person name="Kistler H.C."/>
            <person name="Rep M."/>
        </authorList>
    </citation>
    <scope>GENOME REANNOTATION</scope>
    <source>
        <strain>ATCC MYA-4620 / CBS 123657 / FGSC 9075 / NRRL 31084 / PH-1</strain>
    </source>
</reference>
<reference key="3">
    <citation type="journal article" date="2015" name="BMC Genomics">
        <title>The completed genome sequence of the pathogenic ascomycete fungus Fusarium graminearum.</title>
        <authorList>
            <person name="King R."/>
            <person name="Urban M."/>
            <person name="Hammond-Kosack M.C.U."/>
            <person name="Hassani-Pak K."/>
            <person name="Hammond-Kosack K.E."/>
        </authorList>
    </citation>
    <scope>NUCLEOTIDE SEQUENCE [LARGE SCALE GENOMIC DNA]</scope>
    <source>
        <strain>ATCC MYA-4620 / CBS 123657 / FGSC 9075 / NRRL 31084 / PH-1</strain>
    </source>
</reference>
<name>DBP10_GIBZE</name>
<evidence type="ECO:0000250" key="1"/>
<evidence type="ECO:0000255" key="2">
    <source>
        <dbReference type="PROSITE-ProRule" id="PRU00541"/>
    </source>
</evidence>
<evidence type="ECO:0000255" key="3">
    <source>
        <dbReference type="PROSITE-ProRule" id="PRU00542"/>
    </source>
</evidence>
<evidence type="ECO:0000256" key="4">
    <source>
        <dbReference type="SAM" id="MobiDB-lite"/>
    </source>
</evidence>
<evidence type="ECO:0000305" key="5"/>
<sequence length="897" mass="99105">MPRRGASPTPSEGEIDIFGSLYPGETDNANGGNGGDDFDFDGLLNNPEPGNDDTDEAFIALQQAASFRKATNLKGRTVKKGGGFQAMGLNNNLLKAITRKGFSVPTPIQRKAIPLILDRKDLVGMARTGSGKTAAFVIPMIEKLRAHSARFGTRALIMSPSRELAIQTLKVVKEFSRGTDLKCVLLVGGDSLEEQFGYMAANPDIVIATPGRFLHLKVEMSLDLSSIKYVVFDEADRLFEMGFAAQLTEILHALPPSRQSLLFSATLPASLVEFARAGLQDPSLVRLDAEQKVSPDLESAFFAVKGAEKEGSLLHILHDVIKMPVGSPEGVNNDSEKGSKKRKRGADGGSGKPTEHSTIIFTATKHHVEYLANLLIYAGFAVSYVYGSLDQTARRIQVEDFRMGKTNILVVTDVAARGIDIPVLANVINFDFPPQPKVFVHRVGRTARAGQRGWSYSLVRDTDAPYLIDLQLFLGKKLVVGQETKNPSFSEDVVVGALKRDPVEGHVEWFNKSLHESEDINALRGVAVKAEKLYLRTRNSAASQSAKRSKELVGSQGWTQLHPLFGEDVDGAEQARVDMLARISGFRPQETIFEIGGRRDKGTTEAAEVMKQLRKRITPRRQTEAKADDDFEGIGDDIPAAAEAGADSDEEEVVMDEMDVDEESDDGLEVTVTNTNSKKGRTDWRDSEVFMSYTPRTFNAAEERGYGVSSGGQDPSNFVEAARGVTMDLTNDENAKSFGEPTRSKMRWDKKSRKYVSRENDEDGSKGAKMIRGESGVKIAASFQSGRFDKWKRANRLGKLPHVGEQVRPGSASHAANLPSGVRYKHKQERAPKEADKYRDDFEVRKKRVDEAREKRVGRFRDGMGSKKELKGREDIRKARIEKEKKRLKNARPTRRK</sequence>
<feature type="chain" id="PRO_0000232316" description="ATP-dependent RNA helicase DBP10">
    <location>
        <begin position="1"/>
        <end position="897"/>
    </location>
</feature>
<feature type="domain" description="Helicase ATP-binding" evidence="2">
    <location>
        <begin position="113"/>
        <end position="285"/>
    </location>
</feature>
<feature type="domain" description="Helicase C-terminal" evidence="3">
    <location>
        <begin position="333"/>
        <end position="492"/>
    </location>
</feature>
<feature type="region of interest" description="Disordered" evidence="4">
    <location>
        <begin position="1"/>
        <end position="36"/>
    </location>
</feature>
<feature type="region of interest" description="Disordered" evidence="4">
    <location>
        <begin position="327"/>
        <end position="356"/>
    </location>
</feature>
<feature type="region of interest" description="Disordered" evidence="4">
    <location>
        <begin position="730"/>
        <end position="770"/>
    </location>
</feature>
<feature type="region of interest" description="Disordered" evidence="4">
    <location>
        <begin position="800"/>
        <end position="838"/>
    </location>
</feature>
<feature type="region of interest" description="Disordered" evidence="4">
    <location>
        <begin position="851"/>
        <end position="897"/>
    </location>
</feature>
<feature type="short sequence motif" description="Q motif">
    <location>
        <begin position="82"/>
        <end position="110"/>
    </location>
</feature>
<feature type="short sequence motif" description="DEAD box">
    <location>
        <begin position="233"/>
        <end position="236"/>
    </location>
</feature>
<feature type="compositionally biased region" description="Basic and acidic residues" evidence="4">
    <location>
        <begin position="756"/>
        <end position="766"/>
    </location>
</feature>
<feature type="compositionally biased region" description="Basic and acidic residues" evidence="4">
    <location>
        <begin position="829"/>
        <end position="838"/>
    </location>
</feature>
<feature type="compositionally biased region" description="Basic and acidic residues" evidence="4">
    <location>
        <begin position="851"/>
        <end position="885"/>
    </location>
</feature>
<feature type="compositionally biased region" description="Basic residues" evidence="4">
    <location>
        <begin position="886"/>
        <end position="897"/>
    </location>
</feature>
<feature type="binding site" evidence="2">
    <location>
        <begin position="126"/>
        <end position="133"/>
    </location>
    <ligand>
        <name>ATP</name>
        <dbReference type="ChEBI" id="CHEBI:30616"/>
    </ligand>
</feature>
<proteinExistence type="inferred from homology"/>
<dbReference type="EC" id="3.6.4.13"/>
<dbReference type="EMBL" id="DS231668">
    <property type="protein sequence ID" value="ESU16386.1"/>
    <property type="molecule type" value="Genomic_DNA"/>
</dbReference>
<dbReference type="EMBL" id="HG970335">
    <property type="protein sequence ID" value="CEF84996.1"/>
    <property type="molecule type" value="Genomic_DNA"/>
</dbReference>
<dbReference type="RefSeq" id="XP_011327930.1">
    <property type="nucleotide sequence ID" value="XM_011329628.1"/>
</dbReference>
<dbReference type="SMR" id="Q4HZ42"/>
<dbReference type="FunCoup" id="Q4HZ42">
    <property type="interactions" value="1070"/>
</dbReference>
<dbReference type="STRING" id="229533.Q4HZ42"/>
<dbReference type="GeneID" id="23556702"/>
<dbReference type="KEGG" id="fgr:FGSG_09766"/>
<dbReference type="VEuPathDB" id="FungiDB:FGRAMPH1_01G26333"/>
<dbReference type="eggNOG" id="KOG0337">
    <property type="taxonomic scope" value="Eukaryota"/>
</dbReference>
<dbReference type="HOGENOM" id="CLU_003041_5_2_1"/>
<dbReference type="InParanoid" id="Q4HZ42"/>
<dbReference type="OrthoDB" id="122462at110618"/>
<dbReference type="Proteomes" id="UP000070720">
    <property type="component" value="Chromosome 4"/>
</dbReference>
<dbReference type="GO" id="GO:0005829">
    <property type="term" value="C:cytosol"/>
    <property type="evidence" value="ECO:0007669"/>
    <property type="project" value="TreeGrafter"/>
</dbReference>
<dbReference type="GO" id="GO:0005730">
    <property type="term" value="C:nucleolus"/>
    <property type="evidence" value="ECO:0007669"/>
    <property type="project" value="UniProtKB-SubCell"/>
</dbReference>
<dbReference type="GO" id="GO:0005524">
    <property type="term" value="F:ATP binding"/>
    <property type="evidence" value="ECO:0007669"/>
    <property type="project" value="UniProtKB-KW"/>
</dbReference>
<dbReference type="GO" id="GO:0016887">
    <property type="term" value="F:ATP hydrolysis activity"/>
    <property type="evidence" value="ECO:0007669"/>
    <property type="project" value="RHEA"/>
</dbReference>
<dbReference type="GO" id="GO:0003723">
    <property type="term" value="F:RNA binding"/>
    <property type="evidence" value="ECO:0007669"/>
    <property type="project" value="UniProtKB-KW"/>
</dbReference>
<dbReference type="GO" id="GO:0003724">
    <property type="term" value="F:RNA helicase activity"/>
    <property type="evidence" value="ECO:0007669"/>
    <property type="project" value="UniProtKB-EC"/>
</dbReference>
<dbReference type="GO" id="GO:0006364">
    <property type="term" value="P:rRNA processing"/>
    <property type="evidence" value="ECO:0007669"/>
    <property type="project" value="UniProtKB-KW"/>
</dbReference>
<dbReference type="CDD" id="cd17959">
    <property type="entry name" value="DEADc_DDX54"/>
    <property type="match status" value="1"/>
</dbReference>
<dbReference type="CDD" id="cd18787">
    <property type="entry name" value="SF2_C_DEAD"/>
    <property type="match status" value="1"/>
</dbReference>
<dbReference type="FunFam" id="3.40.50.300:FF:000865">
    <property type="entry name" value="ATP-dependent RNA helicase DDX54"/>
    <property type="match status" value="1"/>
</dbReference>
<dbReference type="Gene3D" id="3.40.50.300">
    <property type="entry name" value="P-loop containing nucleotide triphosphate hydrolases"/>
    <property type="match status" value="2"/>
</dbReference>
<dbReference type="InterPro" id="IPR012541">
    <property type="entry name" value="DBP10_C"/>
</dbReference>
<dbReference type="InterPro" id="IPR033517">
    <property type="entry name" value="DDX54/DBP10_DEAD-box_helicase"/>
</dbReference>
<dbReference type="InterPro" id="IPR011545">
    <property type="entry name" value="DEAD/DEAH_box_helicase_dom"/>
</dbReference>
<dbReference type="InterPro" id="IPR050079">
    <property type="entry name" value="DEAD_box_RNA_helicase"/>
</dbReference>
<dbReference type="InterPro" id="IPR014001">
    <property type="entry name" value="Helicase_ATP-bd"/>
</dbReference>
<dbReference type="InterPro" id="IPR001650">
    <property type="entry name" value="Helicase_C-like"/>
</dbReference>
<dbReference type="InterPro" id="IPR027417">
    <property type="entry name" value="P-loop_NTPase"/>
</dbReference>
<dbReference type="InterPro" id="IPR000629">
    <property type="entry name" value="RNA-helicase_DEAD-box_CS"/>
</dbReference>
<dbReference type="InterPro" id="IPR014014">
    <property type="entry name" value="RNA_helicase_DEAD_Q_motif"/>
</dbReference>
<dbReference type="PANTHER" id="PTHR47959">
    <property type="entry name" value="ATP-DEPENDENT RNA HELICASE RHLE-RELATED"/>
    <property type="match status" value="1"/>
</dbReference>
<dbReference type="PANTHER" id="PTHR47959:SF8">
    <property type="entry name" value="RNA HELICASE"/>
    <property type="match status" value="1"/>
</dbReference>
<dbReference type="Pfam" id="PF08147">
    <property type="entry name" value="DBP10CT"/>
    <property type="match status" value="1"/>
</dbReference>
<dbReference type="Pfam" id="PF00270">
    <property type="entry name" value="DEAD"/>
    <property type="match status" value="1"/>
</dbReference>
<dbReference type="Pfam" id="PF00271">
    <property type="entry name" value="Helicase_C"/>
    <property type="match status" value="1"/>
</dbReference>
<dbReference type="SMART" id="SM01123">
    <property type="entry name" value="DBP10CT"/>
    <property type="match status" value="1"/>
</dbReference>
<dbReference type="SMART" id="SM00487">
    <property type="entry name" value="DEXDc"/>
    <property type="match status" value="1"/>
</dbReference>
<dbReference type="SMART" id="SM00490">
    <property type="entry name" value="HELICc"/>
    <property type="match status" value="1"/>
</dbReference>
<dbReference type="SUPFAM" id="SSF52540">
    <property type="entry name" value="P-loop containing nucleoside triphosphate hydrolases"/>
    <property type="match status" value="2"/>
</dbReference>
<dbReference type="PROSITE" id="PS00039">
    <property type="entry name" value="DEAD_ATP_HELICASE"/>
    <property type="match status" value="1"/>
</dbReference>
<dbReference type="PROSITE" id="PS51192">
    <property type="entry name" value="HELICASE_ATP_BIND_1"/>
    <property type="match status" value="1"/>
</dbReference>
<dbReference type="PROSITE" id="PS51194">
    <property type="entry name" value="HELICASE_CTER"/>
    <property type="match status" value="1"/>
</dbReference>
<dbReference type="PROSITE" id="PS51195">
    <property type="entry name" value="Q_MOTIF"/>
    <property type="match status" value="1"/>
</dbReference>
<accession>Q4HZ42</accession>
<accession>A0A0E0SEY3</accession>
<accession>V6RPJ8</accession>
<organism>
    <name type="scientific">Gibberella zeae (strain ATCC MYA-4620 / CBS 123657 / FGSC 9075 / NRRL 31084 / PH-1)</name>
    <name type="common">Wheat head blight fungus</name>
    <name type="synonym">Fusarium graminearum</name>
    <dbReference type="NCBI Taxonomy" id="229533"/>
    <lineage>
        <taxon>Eukaryota</taxon>
        <taxon>Fungi</taxon>
        <taxon>Dikarya</taxon>
        <taxon>Ascomycota</taxon>
        <taxon>Pezizomycotina</taxon>
        <taxon>Sordariomycetes</taxon>
        <taxon>Hypocreomycetidae</taxon>
        <taxon>Hypocreales</taxon>
        <taxon>Nectriaceae</taxon>
        <taxon>Fusarium</taxon>
    </lineage>
</organism>